<name>TM248_HUMAN</name>
<dbReference type="EMBL" id="AK000961">
    <property type="protein sequence ID" value="BAA91444.1"/>
    <property type="molecule type" value="mRNA"/>
</dbReference>
<dbReference type="EMBL" id="AK222774">
    <property type="protein sequence ID" value="BAD96494.1"/>
    <property type="molecule type" value="mRNA"/>
</dbReference>
<dbReference type="EMBL" id="CH236961">
    <property type="protein sequence ID" value="EAL23731.1"/>
    <property type="molecule type" value="Genomic_DNA"/>
</dbReference>
<dbReference type="EMBL" id="BC008675">
    <property type="protein sequence ID" value="AAH08675.1"/>
    <property type="molecule type" value="mRNA"/>
</dbReference>
<dbReference type="EMBL" id="BC010519">
    <property type="protein sequence ID" value="AAH10519.1"/>
    <property type="molecule type" value="mRNA"/>
</dbReference>
<dbReference type="EMBL" id="BC012562">
    <property type="protein sequence ID" value="AAH12562.1"/>
    <property type="molecule type" value="mRNA"/>
</dbReference>
<dbReference type="EMBL" id="BC041764">
    <property type="protein sequence ID" value="AAH41764.1"/>
    <property type="molecule type" value="mRNA"/>
</dbReference>
<dbReference type="CCDS" id="CCDS5536.1">
    <molecule id="Q9NWD8-1"/>
</dbReference>
<dbReference type="RefSeq" id="NP_060464.1">
    <molecule id="Q9NWD8-1"/>
    <property type="nucleotide sequence ID" value="NM_017994.5"/>
</dbReference>
<dbReference type="RefSeq" id="XP_005250539.1">
    <property type="nucleotide sequence ID" value="XM_005250482.3"/>
</dbReference>
<dbReference type="RefSeq" id="XP_024302588.1">
    <molecule id="Q9NWD8-1"/>
    <property type="nucleotide sequence ID" value="XM_024446820.2"/>
</dbReference>
<dbReference type="RefSeq" id="XP_024302589.1">
    <molecule id="Q9NWD8-1"/>
    <property type="nucleotide sequence ID" value="XM_024446821.2"/>
</dbReference>
<dbReference type="RefSeq" id="XP_054214528.1">
    <molecule id="Q9NWD8-1"/>
    <property type="nucleotide sequence ID" value="XM_054358553.1"/>
</dbReference>
<dbReference type="RefSeq" id="XP_054214529.1">
    <molecule id="Q9NWD8-1"/>
    <property type="nucleotide sequence ID" value="XM_054358554.1"/>
</dbReference>
<dbReference type="BioGRID" id="120386">
    <property type="interactions" value="52"/>
</dbReference>
<dbReference type="FunCoup" id="Q9NWD8">
    <property type="interactions" value="1406"/>
</dbReference>
<dbReference type="IntAct" id="Q9NWD8">
    <property type="interactions" value="48"/>
</dbReference>
<dbReference type="MINT" id="Q9NWD8"/>
<dbReference type="STRING" id="9606.ENSP00000340668"/>
<dbReference type="GlyGen" id="Q9NWD8">
    <property type="glycosylation" value="3 sites, 2 N-linked glycans (3 sites)"/>
</dbReference>
<dbReference type="iPTMnet" id="Q9NWD8"/>
<dbReference type="PhosphoSitePlus" id="Q9NWD8"/>
<dbReference type="SwissPalm" id="Q9NWD8"/>
<dbReference type="BioMuta" id="TMEM248"/>
<dbReference type="DMDM" id="74734652"/>
<dbReference type="jPOST" id="Q9NWD8"/>
<dbReference type="MassIVE" id="Q9NWD8"/>
<dbReference type="PaxDb" id="9606-ENSP00000340668"/>
<dbReference type="PeptideAtlas" id="Q9NWD8"/>
<dbReference type="ProteomicsDB" id="82927">
    <molecule id="Q9NWD8-1"/>
</dbReference>
<dbReference type="ProteomicsDB" id="82928">
    <molecule id="Q9NWD8-2"/>
</dbReference>
<dbReference type="Pumba" id="Q9NWD8"/>
<dbReference type="Antibodypedia" id="3083">
    <property type="antibodies" value="67 antibodies from 16 providers"/>
</dbReference>
<dbReference type="DNASU" id="55069"/>
<dbReference type="Ensembl" id="ENST00000341567.8">
    <molecule id="Q9NWD8-1"/>
    <property type="protein sequence ID" value="ENSP00000340668.4"/>
    <property type="gene ID" value="ENSG00000106609.16"/>
</dbReference>
<dbReference type="Ensembl" id="ENST00000433271.6">
    <molecule id="Q9NWD8-2"/>
    <property type="protein sequence ID" value="ENSP00000405558.2"/>
    <property type="gene ID" value="ENSG00000106609.16"/>
</dbReference>
<dbReference type="GeneID" id="55069"/>
<dbReference type="KEGG" id="hsa:55069"/>
<dbReference type="MANE-Select" id="ENST00000341567.8">
    <property type="protein sequence ID" value="ENSP00000340668.4"/>
    <property type="RefSeq nucleotide sequence ID" value="NM_017994.5"/>
    <property type="RefSeq protein sequence ID" value="NP_060464.1"/>
</dbReference>
<dbReference type="UCSC" id="uc003tvk.4">
    <molecule id="Q9NWD8-1"/>
    <property type="organism name" value="human"/>
</dbReference>
<dbReference type="AGR" id="HGNC:25476"/>
<dbReference type="CTD" id="55069"/>
<dbReference type="DisGeNET" id="55069"/>
<dbReference type="GeneCards" id="TMEM248"/>
<dbReference type="HGNC" id="HGNC:25476">
    <property type="gene designation" value="TMEM248"/>
</dbReference>
<dbReference type="HPA" id="ENSG00000106609">
    <property type="expression patterns" value="Low tissue specificity"/>
</dbReference>
<dbReference type="neXtProt" id="NX_Q9NWD8"/>
<dbReference type="OpenTargets" id="ENSG00000106609"/>
<dbReference type="PharmGKB" id="PA147358581"/>
<dbReference type="VEuPathDB" id="HostDB:ENSG00000106609"/>
<dbReference type="eggNOG" id="ENOG502R6D8">
    <property type="taxonomic scope" value="Eukaryota"/>
</dbReference>
<dbReference type="GeneTree" id="ENSGT00940000153883"/>
<dbReference type="HOGENOM" id="CLU_080742_0_0_1"/>
<dbReference type="InParanoid" id="Q9NWD8"/>
<dbReference type="OMA" id="TLFCYAI"/>
<dbReference type="OrthoDB" id="6329605at2759"/>
<dbReference type="PAN-GO" id="Q9NWD8">
    <property type="GO annotations" value="0 GO annotations based on evolutionary models"/>
</dbReference>
<dbReference type="PhylomeDB" id="Q9NWD8"/>
<dbReference type="TreeFam" id="TF331542"/>
<dbReference type="PathwayCommons" id="Q9NWD8"/>
<dbReference type="SignaLink" id="Q9NWD8"/>
<dbReference type="BioGRID-ORCS" id="55069">
    <property type="hits" value="18 hits in 1160 CRISPR screens"/>
</dbReference>
<dbReference type="ChiTaRS" id="TMEM248">
    <property type="organism name" value="human"/>
</dbReference>
<dbReference type="GenomeRNAi" id="55069"/>
<dbReference type="Pharos" id="Q9NWD8">
    <property type="development level" value="Tdark"/>
</dbReference>
<dbReference type="PRO" id="PR:Q9NWD8"/>
<dbReference type="Proteomes" id="UP000005640">
    <property type="component" value="Chromosome 7"/>
</dbReference>
<dbReference type="RNAct" id="Q9NWD8">
    <property type="molecule type" value="protein"/>
</dbReference>
<dbReference type="Bgee" id="ENSG00000106609">
    <property type="expression patterns" value="Expressed in secondary oocyte and 200 other cell types or tissues"/>
</dbReference>
<dbReference type="ExpressionAtlas" id="Q9NWD8">
    <property type="expression patterns" value="baseline and differential"/>
</dbReference>
<dbReference type="GO" id="GO:0016020">
    <property type="term" value="C:membrane"/>
    <property type="evidence" value="ECO:0007669"/>
    <property type="project" value="UniProtKB-SubCell"/>
</dbReference>
<dbReference type="InterPro" id="IPR039493">
    <property type="entry name" value="TMEM248/TMEM219"/>
</dbReference>
<dbReference type="InterPro" id="IPR039587">
    <property type="entry name" value="TMEM248/TMEM219_dom"/>
</dbReference>
<dbReference type="PANTHER" id="PTHR16002:SF5">
    <property type="entry name" value="TRANSMEMBRANE PROTEIN 248"/>
    <property type="match status" value="1"/>
</dbReference>
<dbReference type="PANTHER" id="PTHR16002">
    <property type="entry name" value="TRANSMEMBRANE PROTEIN 248-LIKE"/>
    <property type="match status" value="1"/>
</dbReference>
<dbReference type="Pfam" id="PF14940">
    <property type="entry name" value="TMEM219"/>
    <property type="match status" value="1"/>
</dbReference>
<sequence length="314" mass="35052">MFSINPLENLKVYISSRPPLVVFMISVSAMAIAFLTLGYFFKIKEIKSPEMAEDWNTFLLRFNDLDLCVSENETLKHLTNDTTTPESTMTSGQARASTQSPQALEDSGPVNISVSITLTLDPLKPFGGYSRNVTHLYSTILGHQIGLSGREAHEEINITFTLPTAWSSDDCALHGHCEQVVFTACMTLTASPGVFPVTVQPPHCVPDTYSNATLWYKIFTTARDANTKYAQDYNPFWCYKGAIGKVYHALNPKLTVIVPDDDRSLINLHLMHTSYFLFVMVITMFCYAVIKGRPSKLRQSNPEFCPEKVALAEA</sequence>
<reference key="1">
    <citation type="journal article" date="2004" name="Nat. Genet.">
        <title>Complete sequencing and characterization of 21,243 full-length human cDNAs.</title>
        <authorList>
            <person name="Ota T."/>
            <person name="Suzuki Y."/>
            <person name="Nishikawa T."/>
            <person name="Otsuki T."/>
            <person name="Sugiyama T."/>
            <person name="Irie R."/>
            <person name="Wakamatsu A."/>
            <person name="Hayashi K."/>
            <person name="Sato H."/>
            <person name="Nagai K."/>
            <person name="Kimura K."/>
            <person name="Makita H."/>
            <person name="Sekine M."/>
            <person name="Obayashi M."/>
            <person name="Nishi T."/>
            <person name="Shibahara T."/>
            <person name="Tanaka T."/>
            <person name="Ishii S."/>
            <person name="Yamamoto J."/>
            <person name="Saito K."/>
            <person name="Kawai Y."/>
            <person name="Isono Y."/>
            <person name="Nakamura Y."/>
            <person name="Nagahari K."/>
            <person name="Murakami K."/>
            <person name="Yasuda T."/>
            <person name="Iwayanagi T."/>
            <person name="Wagatsuma M."/>
            <person name="Shiratori A."/>
            <person name="Sudo H."/>
            <person name="Hosoiri T."/>
            <person name="Kaku Y."/>
            <person name="Kodaira H."/>
            <person name="Kondo H."/>
            <person name="Sugawara M."/>
            <person name="Takahashi M."/>
            <person name="Kanda K."/>
            <person name="Yokoi T."/>
            <person name="Furuya T."/>
            <person name="Kikkawa E."/>
            <person name="Omura Y."/>
            <person name="Abe K."/>
            <person name="Kamihara K."/>
            <person name="Katsuta N."/>
            <person name="Sato K."/>
            <person name="Tanikawa M."/>
            <person name="Yamazaki M."/>
            <person name="Ninomiya K."/>
            <person name="Ishibashi T."/>
            <person name="Yamashita H."/>
            <person name="Murakawa K."/>
            <person name="Fujimori K."/>
            <person name="Tanai H."/>
            <person name="Kimata M."/>
            <person name="Watanabe M."/>
            <person name="Hiraoka S."/>
            <person name="Chiba Y."/>
            <person name="Ishida S."/>
            <person name="Ono Y."/>
            <person name="Takiguchi S."/>
            <person name="Watanabe S."/>
            <person name="Yosida M."/>
            <person name="Hotuta T."/>
            <person name="Kusano J."/>
            <person name="Kanehori K."/>
            <person name="Takahashi-Fujii A."/>
            <person name="Hara H."/>
            <person name="Tanase T.-O."/>
            <person name="Nomura Y."/>
            <person name="Togiya S."/>
            <person name="Komai F."/>
            <person name="Hara R."/>
            <person name="Takeuchi K."/>
            <person name="Arita M."/>
            <person name="Imose N."/>
            <person name="Musashino K."/>
            <person name="Yuuki H."/>
            <person name="Oshima A."/>
            <person name="Sasaki N."/>
            <person name="Aotsuka S."/>
            <person name="Yoshikawa Y."/>
            <person name="Matsunawa H."/>
            <person name="Ichihara T."/>
            <person name="Shiohata N."/>
            <person name="Sano S."/>
            <person name="Moriya S."/>
            <person name="Momiyama H."/>
            <person name="Satoh N."/>
            <person name="Takami S."/>
            <person name="Terashima Y."/>
            <person name="Suzuki O."/>
            <person name="Nakagawa S."/>
            <person name="Senoh A."/>
            <person name="Mizoguchi H."/>
            <person name="Goto Y."/>
            <person name="Shimizu F."/>
            <person name="Wakebe H."/>
            <person name="Hishigaki H."/>
            <person name="Watanabe T."/>
            <person name="Sugiyama A."/>
            <person name="Takemoto M."/>
            <person name="Kawakami B."/>
            <person name="Yamazaki M."/>
            <person name="Watanabe K."/>
            <person name="Kumagai A."/>
            <person name="Itakura S."/>
            <person name="Fukuzumi Y."/>
            <person name="Fujimori Y."/>
            <person name="Komiyama M."/>
            <person name="Tashiro H."/>
            <person name="Tanigami A."/>
            <person name="Fujiwara T."/>
            <person name="Ono T."/>
            <person name="Yamada K."/>
            <person name="Fujii Y."/>
            <person name="Ozaki K."/>
            <person name="Hirao M."/>
            <person name="Ohmori Y."/>
            <person name="Kawabata A."/>
            <person name="Hikiji T."/>
            <person name="Kobatake N."/>
            <person name="Inagaki H."/>
            <person name="Ikema Y."/>
            <person name="Okamoto S."/>
            <person name="Okitani R."/>
            <person name="Kawakami T."/>
            <person name="Noguchi S."/>
            <person name="Itoh T."/>
            <person name="Shigeta K."/>
            <person name="Senba T."/>
            <person name="Matsumura K."/>
            <person name="Nakajima Y."/>
            <person name="Mizuno T."/>
            <person name="Morinaga M."/>
            <person name="Sasaki M."/>
            <person name="Togashi T."/>
            <person name="Oyama M."/>
            <person name="Hata H."/>
            <person name="Watanabe M."/>
            <person name="Komatsu T."/>
            <person name="Mizushima-Sugano J."/>
            <person name="Satoh T."/>
            <person name="Shirai Y."/>
            <person name="Takahashi Y."/>
            <person name="Nakagawa K."/>
            <person name="Okumura K."/>
            <person name="Nagase T."/>
            <person name="Nomura N."/>
            <person name="Kikuchi H."/>
            <person name="Masuho Y."/>
            <person name="Yamashita R."/>
            <person name="Nakai K."/>
            <person name="Yada T."/>
            <person name="Nakamura Y."/>
            <person name="Ohara O."/>
            <person name="Isogai T."/>
            <person name="Sugano S."/>
        </authorList>
    </citation>
    <scope>NUCLEOTIDE SEQUENCE [LARGE SCALE MRNA] (ISOFORM 1)</scope>
    <source>
        <tissue>Embryo</tissue>
    </source>
</reference>
<reference key="2">
    <citation type="submission" date="2005-04" db="EMBL/GenBank/DDBJ databases">
        <authorList>
            <person name="Suzuki Y."/>
            <person name="Sugano S."/>
            <person name="Totoki Y."/>
            <person name="Toyoda A."/>
            <person name="Takeda T."/>
            <person name="Sakaki Y."/>
            <person name="Tanaka A."/>
            <person name="Yokoyama S."/>
        </authorList>
    </citation>
    <scope>NUCLEOTIDE SEQUENCE [LARGE SCALE MRNA] (ISOFORM 1)</scope>
    <source>
        <tissue>Liver</tissue>
    </source>
</reference>
<reference key="3">
    <citation type="journal article" date="2003" name="Science">
        <title>Human chromosome 7: DNA sequence and biology.</title>
        <authorList>
            <person name="Scherer S.W."/>
            <person name="Cheung J."/>
            <person name="MacDonald J.R."/>
            <person name="Osborne L.R."/>
            <person name="Nakabayashi K."/>
            <person name="Herbrick J.-A."/>
            <person name="Carson A.R."/>
            <person name="Parker-Katiraee L."/>
            <person name="Skaug J."/>
            <person name="Khaja R."/>
            <person name="Zhang J."/>
            <person name="Hudek A.K."/>
            <person name="Li M."/>
            <person name="Haddad M."/>
            <person name="Duggan G.E."/>
            <person name="Fernandez B.A."/>
            <person name="Kanematsu E."/>
            <person name="Gentles S."/>
            <person name="Christopoulos C.C."/>
            <person name="Choufani S."/>
            <person name="Kwasnicka D."/>
            <person name="Zheng X.H."/>
            <person name="Lai Z."/>
            <person name="Nusskern D.R."/>
            <person name="Zhang Q."/>
            <person name="Gu Z."/>
            <person name="Lu F."/>
            <person name="Zeesman S."/>
            <person name="Nowaczyk M.J."/>
            <person name="Teshima I."/>
            <person name="Chitayat D."/>
            <person name="Shuman C."/>
            <person name="Weksberg R."/>
            <person name="Zackai E.H."/>
            <person name="Grebe T.A."/>
            <person name="Cox S.R."/>
            <person name="Kirkpatrick S.J."/>
            <person name="Rahman N."/>
            <person name="Friedman J.M."/>
            <person name="Heng H.H.Q."/>
            <person name="Pelicci P.G."/>
            <person name="Lo-Coco F."/>
            <person name="Belloni E."/>
            <person name="Shaffer L.G."/>
            <person name="Pober B."/>
            <person name="Morton C.C."/>
            <person name="Gusella J.F."/>
            <person name="Bruns G.A.P."/>
            <person name="Korf B.R."/>
            <person name="Quade B.J."/>
            <person name="Ligon A.H."/>
            <person name="Ferguson H."/>
            <person name="Higgins A.W."/>
            <person name="Leach N.T."/>
            <person name="Herrick S.R."/>
            <person name="Lemyre E."/>
            <person name="Farra C.G."/>
            <person name="Kim H.-G."/>
            <person name="Summers A.M."/>
            <person name="Gripp K.W."/>
            <person name="Roberts W."/>
            <person name="Szatmari P."/>
            <person name="Winsor E.J.T."/>
            <person name="Grzeschik K.-H."/>
            <person name="Teebi A."/>
            <person name="Minassian B.A."/>
            <person name="Kere J."/>
            <person name="Armengol L."/>
            <person name="Pujana M.A."/>
            <person name="Estivill X."/>
            <person name="Wilson M.D."/>
            <person name="Koop B.F."/>
            <person name="Tosi S."/>
            <person name="Moore G.E."/>
            <person name="Boright A.P."/>
            <person name="Zlotorynski E."/>
            <person name="Kerem B."/>
            <person name="Kroisel P.M."/>
            <person name="Petek E."/>
            <person name="Oscier D.G."/>
            <person name="Mould S.J."/>
            <person name="Doehner H."/>
            <person name="Doehner K."/>
            <person name="Rommens J.M."/>
            <person name="Vincent J.B."/>
            <person name="Venter J.C."/>
            <person name="Li P.W."/>
            <person name="Mural R.J."/>
            <person name="Adams M.D."/>
            <person name="Tsui L.-C."/>
        </authorList>
    </citation>
    <scope>NUCLEOTIDE SEQUENCE [LARGE SCALE GENOMIC DNA]</scope>
</reference>
<reference key="4">
    <citation type="journal article" date="2004" name="Genome Res.">
        <title>The status, quality, and expansion of the NIH full-length cDNA project: the Mammalian Gene Collection (MGC).</title>
        <authorList>
            <consortium name="The MGC Project Team"/>
        </authorList>
    </citation>
    <scope>NUCLEOTIDE SEQUENCE [LARGE SCALE MRNA] (ISOFORMS 1 AND 2)</scope>
    <source>
        <tissue>Brain</tissue>
        <tissue>Colon</tissue>
        <tissue>Skin</tissue>
    </source>
</reference>
<proteinExistence type="evidence at protein level"/>
<keyword id="KW-0025">Alternative splicing</keyword>
<keyword id="KW-0472">Membrane</keyword>
<keyword id="KW-1267">Proteomics identification</keyword>
<keyword id="KW-1185">Reference proteome</keyword>
<keyword id="KW-0812">Transmembrane</keyword>
<keyword id="KW-1133">Transmembrane helix</keyword>
<feature type="chain" id="PRO_0000295126" description="Transmembrane protein 248">
    <location>
        <begin position="1"/>
        <end position="314"/>
    </location>
</feature>
<feature type="transmembrane region" description="Helical" evidence="1">
    <location>
        <begin position="21"/>
        <end position="41"/>
    </location>
</feature>
<feature type="transmembrane region" description="Helical" evidence="1">
    <location>
        <begin position="179"/>
        <end position="199"/>
    </location>
</feature>
<feature type="transmembrane region" description="Helical" evidence="1">
    <location>
        <begin position="236"/>
        <end position="258"/>
    </location>
</feature>
<feature type="transmembrane region" description="Helical" evidence="1">
    <location>
        <begin position="270"/>
        <end position="290"/>
    </location>
</feature>
<feature type="region of interest" description="Disordered" evidence="2">
    <location>
        <begin position="78"/>
        <end position="106"/>
    </location>
</feature>
<feature type="compositionally biased region" description="Polar residues" evidence="2">
    <location>
        <begin position="80"/>
        <end position="102"/>
    </location>
</feature>
<feature type="splice variant" id="VSP_026736" description="In isoform 2." evidence="3">
    <original>QPPH</original>
    <variation>MTVH</variation>
    <location>
        <begin position="200"/>
        <end position="203"/>
    </location>
</feature>
<feature type="splice variant" id="VSP_026737" description="In isoform 2." evidence="3">
    <location>
        <begin position="204"/>
        <end position="314"/>
    </location>
</feature>
<feature type="sequence conflict" description="In Ref. 2; BAD96494." evidence="4" ref="2">
    <original>F</original>
    <variation>L</variation>
    <location>
        <position position="195"/>
    </location>
</feature>
<organism>
    <name type="scientific">Homo sapiens</name>
    <name type="common">Human</name>
    <dbReference type="NCBI Taxonomy" id="9606"/>
    <lineage>
        <taxon>Eukaryota</taxon>
        <taxon>Metazoa</taxon>
        <taxon>Chordata</taxon>
        <taxon>Craniata</taxon>
        <taxon>Vertebrata</taxon>
        <taxon>Euteleostomi</taxon>
        <taxon>Mammalia</taxon>
        <taxon>Eutheria</taxon>
        <taxon>Euarchontoglires</taxon>
        <taxon>Primates</taxon>
        <taxon>Haplorrhini</taxon>
        <taxon>Catarrhini</taxon>
        <taxon>Hominidae</taxon>
        <taxon>Homo</taxon>
    </lineage>
</organism>
<evidence type="ECO:0000255" key="1"/>
<evidence type="ECO:0000256" key="2">
    <source>
        <dbReference type="SAM" id="MobiDB-lite"/>
    </source>
</evidence>
<evidence type="ECO:0000303" key="3">
    <source>
    </source>
</evidence>
<evidence type="ECO:0000305" key="4"/>
<comment type="interaction">
    <interactant intactId="EBI-10314986">
        <id>Q9NWD8</id>
    </interactant>
    <interactant intactId="EBI-12109402">
        <id>Q86W74-2</id>
        <label>ANKRD46</label>
    </interactant>
    <organismsDiffer>false</organismsDiffer>
    <experiments>3</experiments>
</comment>
<comment type="interaction">
    <interactant intactId="EBI-10314986">
        <id>Q9NWD8</id>
    </interactant>
    <interactant intactId="EBI-714543">
        <id>Q15041</id>
        <label>ARL6IP1</label>
    </interactant>
    <organismsDiffer>false</organismsDiffer>
    <experiments>3</experiments>
</comment>
<comment type="interaction">
    <interactant intactId="EBI-10314986">
        <id>Q9NWD8</id>
    </interactant>
    <interactant intactId="EBI-12244618">
        <id>Q6PL45-2</id>
        <label>BRICD5</label>
    </interactant>
    <organismsDiffer>false</organismsDiffer>
    <experiments>3</experiments>
</comment>
<comment type="interaction">
    <interactant intactId="EBI-10314986">
        <id>Q9NWD8</id>
    </interactant>
    <interactant intactId="EBI-12822627">
        <id>O14523</id>
        <label>C2CD2L</label>
    </interactant>
    <organismsDiffer>false</organismsDiffer>
    <experiments>3</experiments>
</comment>
<comment type="interaction">
    <interactant intactId="EBI-10314986">
        <id>Q9NWD8</id>
    </interactant>
    <interactant intactId="EBI-12003442">
        <id>Q8WVX3-2</id>
        <label>C4orf3</label>
    </interactant>
    <organismsDiffer>false</organismsDiffer>
    <experiments>3</experiments>
</comment>
<comment type="interaction">
    <interactant intactId="EBI-10314986">
        <id>Q9NWD8</id>
    </interactant>
    <interactant intactId="EBI-12256978">
        <id>Q8N6F1-2</id>
        <label>CLDN19</label>
    </interactant>
    <organismsDiffer>false</organismsDiffer>
    <experiments>3</experiments>
</comment>
<comment type="interaction">
    <interactant intactId="EBI-10314986">
        <id>Q9NWD8</id>
    </interactant>
    <interactant intactId="EBI-2876774">
        <id>Q92520</id>
        <label>FAM3C</label>
    </interactant>
    <organismsDiffer>false</organismsDiffer>
    <experiments>3</experiments>
</comment>
<comment type="interaction">
    <interactant intactId="EBI-10314986">
        <id>Q9NWD8</id>
    </interactant>
    <interactant intactId="EBI-10178951">
        <id>O00155</id>
        <label>GPR25</label>
    </interactant>
    <organismsDiffer>false</organismsDiffer>
    <experiments>3</experiments>
</comment>
<comment type="interaction">
    <interactant intactId="EBI-10314986">
        <id>Q9NWD8</id>
    </interactant>
    <interactant intactId="EBI-2927498">
        <id>O60883</id>
        <label>GPR37L1</label>
    </interactant>
    <organismsDiffer>false</organismsDiffer>
    <experiments>3</experiments>
</comment>
<comment type="interaction">
    <interactant intactId="EBI-10314986">
        <id>Q9NWD8</id>
    </interactant>
    <interactant intactId="EBI-10232876">
        <id>Q14416</id>
        <label>GRM2</label>
    </interactant>
    <organismsDiffer>false</organismsDiffer>
    <experiments>3</experiments>
</comment>
<comment type="interaction">
    <interactant intactId="EBI-10314986">
        <id>Q9NWD8</id>
    </interactant>
    <interactant intactId="EBI-750776">
        <id>O95214</id>
        <label>LEPROTL1</label>
    </interactant>
    <organismsDiffer>false</organismsDiffer>
    <experiments>3</experiments>
</comment>
<comment type="interaction">
    <interactant intactId="EBI-10314986">
        <id>Q9NWD8</id>
    </interactant>
    <interactant intactId="EBI-2820517">
        <id>Q8TAF8</id>
        <label>LHFPL5</label>
    </interactant>
    <organismsDiffer>false</organismsDiffer>
    <experiments>3</experiments>
</comment>
<comment type="interaction">
    <interactant intactId="EBI-10314986">
        <id>Q9NWD8</id>
    </interactant>
    <interactant intactId="EBI-3932027">
        <id>P21145</id>
        <label>MAL</label>
    </interactant>
    <organismsDiffer>false</organismsDiffer>
    <experiments>3</experiments>
</comment>
<comment type="interaction">
    <interactant intactId="EBI-10314986">
        <id>Q9NWD8</id>
    </interactant>
    <interactant intactId="EBI-750078">
        <id>Q13021</id>
        <label>MALL</label>
    </interactant>
    <organismsDiffer>false</organismsDiffer>
    <experiments>3</experiments>
</comment>
<comment type="interaction">
    <interactant intactId="EBI-10314986">
        <id>Q9NWD8</id>
    </interactant>
    <interactant intactId="EBI-8636004">
        <id>Q96GQ5</id>
        <label>RUSF1</label>
    </interactant>
    <organismsDiffer>false</organismsDiffer>
    <experiments>3</experiments>
</comment>
<comment type="interaction">
    <interactant intactId="EBI-10314986">
        <id>Q9NWD8</id>
    </interactant>
    <interactant intactId="EBI-1054782">
        <id>Q8TB61</id>
        <label>SLC35B2</label>
    </interactant>
    <organismsDiffer>false</organismsDiffer>
    <experiments>3</experiments>
</comment>
<comment type="interaction">
    <interactant intactId="EBI-10314986">
        <id>Q9NWD8</id>
    </interactant>
    <interactant intactId="EBI-12266234">
        <id>Q8IVJ1</id>
        <label>SLC41A1</label>
    </interactant>
    <organismsDiffer>false</organismsDiffer>
    <experiments>3</experiments>
</comment>
<comment type="interaction">
    <interactant intactId="EBI-10314986">
        <id>Q9NWD8</id>
    </interactant>
    <interactant intactId="EBI-7131783">
        <id>Q8N205</id>
        <label>SYNE4</label>
    </interactant>
    <organismsDiffer>false</organismsDiffer>
    <experiments>3</experiments>
</comment>
<comment type="interaction">
    <interactant intactId="EBI-10314986">
        <id>Q9NWD8</id>
    </interactant>
    <interactant intactId="EBI-13075176">
        <id>Q8N2H4</id>
        <label>SYS1</label>
    </interactant>
    <organismsDiffer>false</organismsDiffer>
    <experiments>3</experiments>
</comment>
<comment type="interaction">
    <interactant intactId="EBI-10314986">
        <id>Q9NWD8</id>
    </interactant>
    <interactant intactId="EBI-348587">
        <id>Q9BVK8</id>
        <label>TMEM147</label>
    </interactant>
    <organismsDiffer>false</organismsDiffer>
    <experiments>3</experiments>
</comment>
<comment type="interaction">
    <interactant intactId="EBI-10314986">
        <id>Q9NWD8</id>
    </interactant>
    <interactant intactId="EBI-11528917">
        <id>Q8WW34-2</id>
        <label>TMEM239</label>
    </interactant>
    <organismsDiffer>false</organismsDiffer>
    <experiments>3</experiments>
</comment>
<comment type="interaction">
    <interactant intactId="EBI-10314986">
        <id>Q9NWD8</id>
    </interactant>
    <interactant intactId="EBI-2548832">
        <id>Q8N661</id>
        <label>TMEM86B</label>
    </interactant>
    <organismsDiffer>false</organismsDiffer>
    <experiments>3</experiments>
</comment>
<comment type="interaction">
    <interactant intactId="EBI-10314986">
        <id>Q9NWD8</id>
    </interactant>
    <interactant intactId="EBI-11988865">
        <id>A5PKU2</id>
        <label>TUSC5</label>
    </interactant>
    <organismsDiffer>false</organismsDiffer>
    <experiments>3</experiments>
</comment>
<comment type="interaction">
    <interactant intactId="EBI-10314986">
        <id>Q9NWD8</id>
    </interactant>
    <interactant intactId="EBI-12190699">
        <id>Q6UX27-3</id>
        <label>VSTM1</label>
    </interactant>
    <organismsDiffer>false</organismsDiffer>
    <experiments>3</experiments>
</comment>
<comment type="interaction">
    <interactant intactId="EBI-10314986">
        <id>Q9NWD8</id>
    </interactant>
    <interactant intactId="EBI-2799703">
        <id>O95070</id>
        <label>YIF1A</label>
    </interactant>
    <organismsDiffer>false</organismsDiffer>
    <experiments>3</experiments>
</comment>
<comment type="interaction">
    <interactant intactId="EBI-10314986">
        <id>Q9NWD8</id>
    </interactant>
    <interactant intactId="EBI-7850136">
        <id>Q9Y548</id>
        <label>YIPF1</label>
    </interactant>
    <organismsDiffer>false</organismsDiffer>
    <experiments>3</experiments>
</comment>
<comment type="subcellular location">
    <subcellularLocation>
        <location evidence="4">Membrane</location>
        <topology evidence="4">Multi-pass membrane protein</topology>
    </subcellularLocation>
</comment>
<comment type="alternative products">
    <event type="alternative splicing"/>
    <isoform>
        <id>Q9NWD8-1</id>
        <name>1</name>
        <sequence type="displayed"/>
    </isoform>
    <isoform>
        <id>Q9NWD8-2</id>
        <name>2</name>
        <sequence type="described" ref="VSP_026736 VSP_026737"/>
    </isoform>
</comment>
<comment type="similarity">
    <text evidence="4">Belongs to the TMEM248 family.</text>
</comment>
<gene>
    <name type="primary">TMEM248</name>
    <name type="synonym">C7orf42</name>
</gene>
<accession>Q9NWD8</accession>
<accession>Q53H07</accession>
<accession>Q96FR2</accession>
<protein>
    <recommendedName>
        <fullName>Transmembrane protein 248</fullName>
    </recommendedName>
</protein>